<comment type="function">
    <text evidence="1">Regulatory subunit of a potassium efflux system that confers protection against electrophiles. Required for full activity of KefB.</text>
</comment>
<comment type="catalytic activity">
    <reaction evidence="1">
        <text>a quinone + NADH + H(+) = a quinol + NAD(+)</text>
        <dbReference type="Rhea" id="RHEA:46160"/>
        <dbReference type="ChEBI" id="CHEBI:15378"/>
        <dbReference type="ChEBI" id="CHEBI:24646"/>
        <dbReference type="ChEBI" id="CHEBI:57540"/>
        <dbReference type="ChEBI" id="CHEBI:57945"/>
        <dbReference type="ChEBI" id="CHEBI:132124"/>
        <dbReference type="EC" id="1.6.5.2"/>
    </reaction>
</comment>
<comment type="catalytic activity">
    <reaction evidence="1">
        <text>a quinone + NADPH + H(+) = a quinol + NADP(+)</text>
        <dbReference type="Rhea" id="RHEA:46164"/>
        <dbReference type="ChEBI" id="CHEBI:15378"/>
        <dbReference type="ChEBI" id="CHEBI:24646"/>
        <dbReference type="ChEBI" id="CHEBI:57783"/>
        <dbReference type="ChEBI" id="CHEBI:58349"/>
        <dbReference type="ChEBI" id="CHEBI:132124"/>
        <dbReference type="EC" id="1.6.5.2"/>
    </reaction>
</comment>
<comment type="subunit">
    <text evidence="1">Interacts with KefB.</text>
</comment>
<comment type="subcellular location">
    <subcellularLocation>
        <location evidence="1">Cell inner membrane</location>
        <topology evidence="1">Peripheral membrane protein</topology>
        <orientation evidence="1">Cytoplasmic side</orientation>
    </subcellularLocation>
</comment>
<comment type="similarity">
    <text evidence="1">Belongs to the NAD(P)H dehydrogenase (quinone) family. KefG subfamily.</text>
</comment>
<protein>
    <recommendedName>
        <fullName evidence="1">Glutathione-regulated potassium-efflux system ancillary protein KefG</fullName>
    </recommendedName>
    <alternativeName>
        <fullName evidence="1">Putative quinone oxidoreductase KefG</fullName>
        <ecNumber evidence="1">1.6.5.2</ecNumber>
    </alternativeName>
</protein>
<feature type="chain" id="PRO_1000145578" description="Glutathione-regulated potassium-efflux system ancillary protein KefG">
    <location>
        <begin position="1"/>
        <end position="184"/>
    </location>
</feature>
<evidence type="ECO:0000255" key="1">
    <source>
        <dbReference type="HAMAP-Rule" id="MF_01415"/>
    </source>
</evidence>
<accession>A7ME22</accession>
<organism>
    <name type="scientific">Cronobacter sakazakii (strain ATCC BAA-894)</name>
    <name type="common">Enterobacter sakazakii</name>
    <dbReference type="NCBI Taxonomy" id="290339"/>
    <lineage>
        <taxon>Bacteria</taxon>
        <taxon>Pseudomonadati</taxon>
        <taxon>Pseudomonadota</taxon>
        <taxon>Gammaproteobacteria</taxon>
        <taxon>Enterobacterales</taxon>
        <taxon>Enterobacteriaceae</taxon>
        <taxon>Cronobacter</taxon>
    </lineage>
</organism>
<proteinExistence type="inferred from homology"/>
<gene>
    <name evidence="1" type="primary">kefG</name>
    <name type="ordered locus">ESA_04388</name>
</gene>
<keyword id="KW-0997">Cell inner membrane</keyword>
<keyword id="KW-1003">Cell membrane</keyword>
<keyword id="KW-0472">Membrane</keyword>
<keyword id="KW-0520">NAD</keyword>
<keyword id="KW-0560">Oxidoreductase</keyword>
<keyword id="KW-1185">Reference proteome</keyword>
<reference key="1">
    <citation type="journal article" date="2010" name="PLoS ONE">
        <title>Genome sequence of Cronobacter sakazakii BAA-894 and comparative genomic hybridization analysis with other Cronobacter species.</title>
        <authorList>
            <person name="Kucerova E."/>
            <person name="Clifton S.W."/>
            <person name="Xia X.Q."/>
            <person name="Long F."/>
            <person name="Porwollik S."/>
            <person name="Fulton L."/>
            <person name="Fronick C."/>
            <person name="Minx P."/>
            <person name="Kyung K."/>
            <person name="Warren W."/>
            <person name="Fulton R."/>
            <person name="Feng D."/>
            <person name="Wollam A."/>
            <person name="Shah N."/>
            <person name="Bhonagiri V."/>
            <person name="Nash W.E."/>
            <person name="Hallsworth-Pepin K."/>
            <person name="Wilson R.K."/>
            <person name="McClelland M."/>
            <person name="Forsythe S.J."/>
        </authorList>
    </citation>
    <scope>NUCLEOTIDE SEQUENCE [LARGE SCALE GENOMIC DNA]</scope>
    <source>
        <strain>ATCC BAA-894</strain>
    </source>
</reference>
<dbReference type="EC" id="1.6.5.2" evidence="1"/>
<dbReference type="EMBL" id="CP000783">
    <property type="protein sequence ID" value="ABU79567.1"/>
    <property type="molecule type" value="Genomic_DNA"/>
</dbReference>
<dbReference type="SMR" id="A7ME22"/>
<dbReference type="KEGG" id="esa:ESA_04388"/>
<dbReference type="HOGENOM" id="CLU_058643_0_1_6"/>
<dbReference type="Proteomes" id="UP000000260">
    <property type="component" value="Chromosome"/>
</dbReference>
<dbReference type="GO" id="GO:0005886">
    <property type="term" value="C:plasma membrane"/>
    <property type="evidence" value="ECO:0007669"/>
    <property type="project" value="UniProtKB-SubCell"/>
</dbReference>
<dbReference type="GO" id="GO:0009055">
    <property type="term" value="F:electron transfer activity"/>
    <property type="evidence" value="ECO:0007669"/>
    <property type="project" value="TreeGrafter"/>
</dbReference>
<dbReference type="GO" id="GO:0010181">
    <property type="term" value="F:FMN binding"/>
    <property type="evidence" value="ECO:0007669"/>
    <property type="project" value="TreeGrafter"/>
</dbReference>
<dbReference type="GO" id="GO:0050136">
    <property type="term" value="F:NADH:ubiquinone reductase (non-electrogenic) activity"/>
    <property type="evidence" value="ECO:0007669"/>
    <property type="project" value="RHEA"/>
</dbReference>
<dbReference type="GO" id="GO:0008753">
    <property type="term" value="F:NADPH dehydrogenase (quinone) activity"/>
    <property type="evidence" value="ECO:0007669"/>
    <property type="project" value="RHEA"/>
</dbReference>
<dbReference type="GO" id="GO:1901381">
    <property type="term" value="P:positive regulation of potassium ion transmembrane transport"/>
    <property type="evidence" value="ECO:0007669"/>
    <property type="project" value="UniProtKB-UniRule"/>
</dbReference>
<dbReference type="GO" id="GO:0006813">
    <property type="term" value="P:potassium ion transport"/>
    <property type="evidence" value="ECO:0007669"/>
    <property type="project" value="InterPro"/>
</dbReference>
<dbReference type="FunFam" id="3.40.50.360:FF:000013">
    <property type="entry name" value="Glutathione-regulated potassium-efflux system ancillary protein KefG"/>
    <property type="match status" value="1"/>
</dbReference>
<dbReference type="Gene3D" id="3.40.50.360">
    <property type="match status" value="1"/>
</dbReference>
<dbReference type="HAMAP" id="MF_01415">
    <property type="entry name" value="K_H_efflux_KefG"/>
    <property type="match status" value="1"/>
</dbReference>
<dbReference type="InterPro" id="IPR003680">
    <property type="entry name" value="Flavodoxin_fold"/>
</dbReference>
<dbReference type="InterPro" id="IPR029039">
    <property type="entry name" value="Flavoprotein-like_sf"/>
</dbReference>
<dbReference type="InterPro" id="IPR023947">
    <property type="entry name" value="K_H_efflux_KefG"/>
</dbReference>
<dbReference type="InterPro" id="IPR046980">
    <property type="entry name" value="KefG/KefF"/>
</dbReference>
<dbReference type="NCBIfam" id="NF003430">
    <property type="entry name" value="PRK04930.1"/>
    <property type="match status" value="1"/>
</dbReference>
<dbReference type="PANTHER" id="PTHR47307">
    <property type="entry name" value="GLUTATHIONE-REGULATED POTASSIUM-EFFLUX SYSTEM ANCILLARY PROTEIN KEFG"/>
    <property type="match status" value="1"/>
</dbReference>
<dbReference type="PANTHER" id="PTHR47307:SF1">
    <property type="entry name" value="GLUTATHIONE-REGULATED POTASSIUM-EFFLUX SYSTEM ANCILLARY PROTEIN KEFG"/>
    <property type="match status" value="1"/>
</dbReference>
<dbReference type="Pfam" id="PF02525">
    <property type="entry name" value="Flavodoxin_2"/>
    <property type="match status" value="1"/>
</dbReference>
<dbReference type="SUPFAM" id="SSF52218">
    <property type="entry name" value="Flavoproteins"/>
    <property type="match status" value="1"/>
</dbReference>
<name>KEFG_CROS8</name>
<sequence>MMSQTAKVLLLYAHPESQDSVANRVLLKPALQLPNVTVHDLYAHYPDFFIDISHEQALLRDHDVIVFQFPLYTYSCPALLKEWFDRVLSRGFASGVGGNQLAGKYWRCVITTGEPETAYRPDGFNRYALSDILRPFELTAAMCRMHWMTPLIIYWARRQSLSELASHGRAYERWLADPLTPGGF</sequence>